<proteinExistence type="inferred from homology"/>
<organism>
    <name type="scientific">Acinetobacter baumannii (strain ATCC 17978 / DSM 105126 / CIP 53.77 / LMG 1025 / NCDC KC755 / 5377)</name>
    <dbReference type="NCBI Taxonomy" id="400667"/>
    <lineage>
        <taxon>Bacteria</taxon>
        <taxon>Pseudomonadati</taxon>
        <taxon>Pseudomonadota</taxon>
        <taxon>Gammaproteobacteria</taxon>
        <taxon>Moraxellales</taxon>
        <taxon>Moraxellaceae</taxon>
        <taxon>Acinetobacter</taxon>
        <taxon>Acinetobacter calcoaceticus/baumannii complex</taxon>
    </lineage>
</organism>
<comment type="function">
    <text evidence="1">Catalyzes the ATP-dependent 2-thiolation of cytidine in position 32 of tRNA, to form 2-thiocytidine (s(2)C32). The sulfur atoms are provided by the cysteine/cysteine desulfurase (IscS) system.</text>
</comment>
<comment type="catalytic activity">
    <reaction evidence="1">
        <text>cytidine(32) in tRNA + S-sulfanyl-L-cysteinyl-[cysteine desulfurase] + AH2 + ATP = 2-thiocytidine(32) in tRNA + L-cysteinyl-[cysteine desulfurase] + A + AMP + diphosphate + H(+)</text>
        <dbReference type="Rhea" id="RHEA:57048"/>
        <dbReference type="Rhea" id="RHEA-COMP:10288"/>
        <dbReference type="Rhea" id="RHEA-COMP:12157"/>
        <dbReference type="Rhea" id="RHEA-COMP:12158"/>
        <dbReference type="Rhea" id="RHEA-COMP:14821"/>
        <dbReference type="ChEBI" id="CHEBI:13193"/>
        <dbReference type="ChEBI" id="CHEBI:15378"/>
        <dbReference type="ChEBI" id="CHEBI:17499"/>
        <dbReference type="ChEBI" id="CHEBI:29950"/>
        <dbReference type="ChEBI" id="CHEBI:30616"/>
        <dbReference type="ChEBI" id="CHEBI:33019"/>
        <dbReference type="ChEBI" id="CHEBI:61963"/>
        <dbReference type="ChEBI" id="CHEBI:82748"/>
        <dbReference type="ChEBI" id="CHEBI:141453"/>
        <dbReference type="ChEBI" id="CHEBI:456215"/>
    </reaction>
    <physiologicalReaction direction="left-to-right" evidence="1">
        <dbReference type="Rhea" id="RHEA:57049"/>
    </physiologicalReaction>
</comment>
<comment type="cofactor">
    <cofactor evidence="1">
        <name>Mg(2+)</name>
        <dbReference type="ChEBI" id="CHEBI:18420"/>
    </cofactor>
</comment>
<comment type="cofactor">
    <cofactor evidence="1">
        <name>[4Fe-4S] cluster</name>
        <dbReference type="ChEBI" id="CHEBI:49883"/>
    </cofactor>
    <text evidence="1">Binds 1 [4Fe-4S] cluster per subunit. The cluster is chelated by three Cys residues, the fourth Fe has a free coordination site that may bind a sulfur atom transferred from the persulfide of IscS.</text>
</comment>
<comment type="pathway">
    <text evidence="1">tRNA modification.</text>
</comment>
<comment type="subunit">
    <text evidence="1">Homodimer.</text>
</comment>
<comment type="subcellular location">
    <subcellularLocation>
        <location evidence="1">Cytoplasm</location>
    </subcellularLocation>
</comment>
<comment type="miscellaneous">
    <text evidence="1">The thiolation reaction likely consists of two steps: a first activation step by ATP to form an adenylated intermediate of the target base of tRNA, and a second nucleophilic substitution step of the sulfur (S) atom supplied by the hydrosulfide attached to the Fe-S cluster.</text>
</comment>
<comment type="similarity">
    <text evidence="1">Belongs to the TtcA family.</text>
</comment>
<dbReference type="EC" id="2.8.1.-" evidence="1"/>
<dbReference type="EMBL" id="CP000521">
    <property type="protein sequence ID" value="ABO13072.2"/>
    <property type="molecule type" value="Genomic_DNA"/>
</dbReference>
<dbReference type="RefSeq" id="WP_000271251.1">
    <property type="nucleotide sequence ID" value="NZ_CP053098.1"/>
</dbReference>
<dbReference type="SMR" id="A3M828"/>
<dbReference type="GeneID" id="92894931"/>
<dbReference type="KEGG" id="acb:A1S_2656"/>
<dbReference type="HOGENOM" id="CLU_026481_0_0_6"/>
<dbReference type="GO" id="GO:0005737">
    <property type="term" value="C:cytoplasm"/>
    <property type="evidence" value="ECO:0007669"/>
    <property type="project" value="UniProtKB-SubCell"/>
</dbReference>
<dbReference type="GO" id="GO:0051539">
    <property type="term" value="F:4 iron, 4 sulfur cluster binding"/>
    <property type="evidence" value="ECO:0007669"/>
    <property type="project" value="UniProtKB-UniRule"/>
</dbReference>
<dbReference type="GO" id="GO:0005524">
    <property type="term" value="F:ATP binding"/>
    <property type="evidence" value="ECO:0007669"/>
    <property type="project" value="UniProtKB-UniRule"/>
</dbReference>
<dbReference type="GO" id="GO:0000287">
    <property type="term" value="F:magnesium ion binding"/>
    <property type="evidence" value="ECO:0007669"/>
    <property type="project" value="UniProtKB-UniRule"/>
</dbReference>
<dbReference type="GO" id="GO:0016783">
    <property type="term" value="F:sulfurtransferase activity"/>
    <property type="evidence" value="ECO:0007669"/>
    <property type="project" value="UniProtKB-UniRule"/>
</dbReference>
<dbReference type="GO" id="GO:0000049">
    <property type="term" value="F:tRNA binding"/>
    <property type="evidence" value="ECO:0007669"/>
    <property type="project" value="UniProtKB-KW"/>
</dbReference>
<dbReference type="GO" id="GO:0034227">
    <property type="term" value="P:tRNA thio-modification"/>
    <property type="evidence" value="ECO:0007669"/>
    <property type="project" value="UniProtKB-UniRule"/>
</dbReference>
<dbReference type="CDD" id="cd24138">
    <property type="entry name" value="TtcA-like"/>
    <property type="match status" value="1"/>
</dbReference>
<dbReference type="Gene3D" id="3.40.50.620">
    <property type="entry name" value="HUPs"/>
    <property type="match status" value="1"/>
</dbReference>
<dbReference type="HAMAP" id="MF_01850">
    <property type="entry name" value="TtcA"/>
    <property type="match status" value="1"/>
</dbReference>
<dbReference type="InterPro" id="IPR014729">
    <property type="entry name" value="Rossmann-like_a/b/a_fold"/>
</dbReference>
<dbReference type="InterPro" id="IPR011063">
    <property type="entry name" value="TilS/TtcA_N"/>
</dbReference>
<dbReference type="InterPro" id="IPR012089">
    <property type="entry name" value="tRNA_Cyd_32_2_STrfase"/>
</dbReference>
<dbReference type="InterPro" id="IPR035107">
    <property type="entry name" value="tRNA_thiolation_TtcA_Ctu1"/>
</dbReference>
<dbReference type="NCBIfam" id="NF007972">
    <property type="entry name" value="PRK10696.1"/>
    <property type="match status" value="1"/>
</dbReference>
<dbReference type="PANTHER" id="PTHR43686:SF1">
    <property type="entry name" value="AMINOTRAN_5 DOMAIN-CONTAINING PROTEIN"/>
    <property type="match status" value="1"/>
</dbReference>
<dbReference type="PANTHER" id="PTHR43686">
    <property type="entry name" value="SULFURTRANSFERASE-RELATED"/>
    <property type="match status" value="1"/>
</dbReference>
<dbReference type="Pfam" id="PF01171">
    <property type="entry name" value="ATP_bind_3"/>
    <property type="match status" value="1"/>
</dbReference>
<dbReference type="PIRSF" id="PIRSF004976">
    <property type="entry name" value="ATPase_YdaO"/>
    <property type="match status" value="1"/>
</dbReference>
<dbReference type="SUPFAM" id="SSF52402">
    <property type="entry name" value="Adenine nucleotide alpha hydrolases-like"/>
    <property type="match status" value="1"/>
</dbReference>
<reference key="1">
    <citation type="journal article" date="2007" name="Genes Dev.">
        <title>New insights into Acinetobacter baumannii pathogenesis revealed by high-density pyrosequencing and transposon mutagenesis.</title>
        <authorList>
            <person name="Smith M.G."/>
            <person name="Gianoulis T.A."/>
            <person name="Pukatzki S."/>
            <person name="Mekalanos J.J."/>
            <person name="Ornston L.N."/>
            <person name="Gerstein M."/>
            <person name="Snyder M."/>
        </authorList>
    </citation>
    <scope>NUCLEOTIDE SEQUENCE [LARGE SCALE GENOMIC DNA]</scope>
    <source>
        <strain>ATCC 17978 / DSM 105126 / CIP 53.77 / LMG 1025 / NCDC KC755 / 5377</strain>
    </source>
</reference>
<keyword id="KW-0004">4Fe-4S</keyword>
<keyword id="KW-0067">ATP-binding</keyword>
<keyword id="KW-0963">Cytoplasm</keyword>
<keyword id="KW-0408">Iron</keyword>
<keyword id="KW-0411">Iron-sulfur</keyword>
<keyword id="KW-0460">Magnesium</keyword>
<keyword id="KW-0479">Metal-binding</keyword>
<keyword id="KW-0547">Nucleotide-binding</keyword>
<keyword id="KW-0694">RNA-binding</keyword>
<keyword id="KW-0808">Transferase</keyword>
<keyword id="KW-0819">tRNA processing</keyword>
<keyword id="KW-0820">tRNA-binding</keyword>
<gene>
    <name evidence="1" type="primary">ttcA</name>
    <name type="ordered locus">A1S_2656</name>
</gene>
<feature type="chain" id="PRO_0000348648" description="tRNA-cytidine(32) 2-sulfurtransferase">
    <location>
        <begin position="1"/>
        <end position="301"/>
    </location>
</feature>
<feature type="short sequence motif" description="PP-loop motif" evidence="1">
    <location>
        <begin position="55"/>
        <end position="60"/>
    </location>
</feature>
<feature type="binding site" evidence="1">
    <location>
        <position position="130"/>
    </location>
    <ligand>
        <name>[4Fe-4S] cluster</name>
        <dbReference type="ChEBI" id="CHEBI:49883"/>
    </ligand>
</feature>
<feature type="binding site" evidence="1">
    <location>
        <position position="133"/>
    </location>
    <ligand>
        <name>[4Fe-4S] cluster</name>
        <dbReference type="ChEBI" id="CHEBI:49883"/>
    </ligand>
</feature>
<feature type="binding site" evidence="1">
    <location>
        <position position="221"/>
    </location>
    <ligand>
        <name>[4Fe-4S] cluster</name>
        <dbReference type="ChEBI" id="CHEBI:49883"/>
    </ligand>
</feature>
<protein>
    <recommendedName>
        <fullName evidence="1">tRNA-cytidine(32) 2-sulfurtransferase</fullName>
        <ecNumber evidence="1">2.8.1.-</ecNumber>
    </recommendedName>
    <alternativeName>
        <fullName evidence="1">Two-thiocytidine biosynthesis protein A</fullName>
    </alternativeName>
    <alternativeName>
        <fullName evidence="1">tRNA 2-thiocytidine biosynthesis protein TtcA</fullName>
    </alternativeName>
</protein>
<accession>A3M828</accession>
<sequence>MYAPVESNEGFNFKPELPTSSAYYRLLKKLRRQVGHAIRDFNMIEDGDKVMVCVSGGKDSYTLLDILLQFKRIAPINFDIVAVNLDQKQPGFPEDVLPRYMEENNIPYYILEKDTYSITKRLTPEGKTYCAVCSRLRRGSLYGFAQEIGATKVALGHHRDDIIATFFLNLFHGGSLKAMPPKLLSSDKKNILIRPLAYVEEKDIIKYAELRKFPIIPCNLCGSQENLQRAMINEMLREWDRQYPKRLHSIFGALQNVSPSQLADRDLFDFEVLDSQRELDFKDPEELKKRLDVVNLSFAAE</sequence>
<evidence type="ECO:0000255" key="1">
    <source>
        <dbReference type="HAMAP-Rule" id="MF_01850"/>
    </source>
</evidence>
<name>TTCA_ACIBT</name>